<keyword id="KW-0028">Amino-acid biosynthesis</keyword>
<keyword id="KW-0963">Cytoplasm</keyword>
<keyword id="KW-0220">Diaminopimelate biosynthesis</keyword>
<keyword id="KW-0456">Lyase</keyword>
<keyword id="KW-0457">Lysine biosynthesis</keyword>
<keyword id="KW-1185">Reference proteome</keyword>
<keyword id="KW-0704">Schiff base</keyword>
<feature type="chain" id="PRO_0000103196" description="4-hydroxy-tetrahydrodipicolinate synthase">
    <location>
        <begin position="1"/>
        <end position="291"/>
    </location>
</feature>
<feature type="active site" description="Proton donor/acceptor" evidence="1">
    <location>
        <position position="131"/>
    </location>
</feature>
<feature type="active site" description="Schiff-base intermediate with substrate" evidence="1">
    <location>
        <position position="159"/>
    </location>
</feature>
<feature type="binding site" evidence="1">
    <location>
        <position position="45"/>
    </location>
    <ligand>
        <name>pyruvate</name>
        <dbReference type="ChEBI" id="CHEBI:15361"/>
    </ligand>
</feature>
<feature type="binding site" evidence="1">
    <location>
        <position position="202"/>
    </location>
    <ligand>
        <name>pyruvate</name>
        <dbReference type="ChEBI" id="CHEBI:15361"/>
    </ligand>
</feature>
<feature type="site" description="Part of a proton relay during catalysis" evidence="1">
    <location>
        <position position="44"/>
    </location>
</feature>
<feature type="site" description="Part of a proton relay during catalysis" evidence="1">
    <location>
        <position position="105"/>
    </location>
</feature>
<evidence type="ECO:0000255" key="1">
    <source>
        <dbReference type="HAMAP-Rule" id="MF_00418"/>
    </source>
</evidence>
<evidence type="ECO:0000305" key="2"/>
<comment type="function">
    <text evidence="1">Catalyzes the condensation of (S)-aspartate-beta-semialdehyde [(S)-ASA] and pyruvate to 4-hydroxy-tetrahydrodipicolinate (HTPA).</text>
</comment>
<comment type="catalytic activity">
    <reaction evidence="1">
        <text>L-aspartate 4-semialdehyde + pyruvate = (2S,4S)-4-hydroxy-2,3,4,5-tetrahydrodipicolinate + H2O + H(+)</text>
        <dbReference type="Rhea" id="RHEA:34171"/>
        <dbReference type="ChEBI" id="CHEBI:15361"/>
        <dbReference type="ChEBI" id="CHEBI:15377"/>
        <dbReference type="ChEBI" id="CHEBI:15378"/>
        <dbReference type="ChEBI" id="CHEBI:67139"/>
        <dbReference type="ChEBI" id="CHEBI:537519"/>
        <dbReference type="EC" id="4.3.3.7"/>
    </reaction>
</comment>
<comment type="pathway">
    <text evidence="1">Amino-acid biosynthesis; L-lysine biosynthesis via DAP pathway; (S)-tetrahydrodipicolinate from L-aspartate: step 3/4.</text>
</comment>
<comment type="subunit">
    <text evidence="1">Homotetramer; dimer of dimers.</text>
</comment>
<comment type="subcellular location">
    <subcellularLocation>
        <location evidence="1">Cytoplasm</location>
    </subcellularLocation>
</comment>
<comment type="similarity">
    <text evidence="1">Belongs to the DapA family.</text>
</comment>
<comment type="caution">
    <text evidence="2">Was originally thought to be a dihydrodipicolinate synthase (DHDPS), catalyzing the condensation of (S)-aspartate-beta-semialdehyde [(S)-ASA] and pyruvate to dihydrodipicolinate (DHDP). However, it was shown in E.coli that the product of the enzymatic reaction is not dihydrodipicolinate but in fact (4S)-4-hydroxy-2,3,4,5-tetrahydro-(2S)-dipicolinic acid (HTPA), and that the consecutive dehydration reaction leading to DHDP is not spontaneous but catalyzed by DapB.</text>
</comment>
<name>DAPA_METAC</name>
<protein>
    <recommendedName>
        <fullName evidence="1">4-hydroxy-tetrahydrodipicolinate synthase</fullName>
        <shortName evidence="1">HTPA synthase</shortName>
        <ecNumber evidence="1">4.3.3.7</ecNumber>
    </recommendedName>
</protein>
<dbReference type="EC" id="4.3.3.7" evidence="1"/>
<dbReference type="EMBL" id="AE010299">
    <property type="protein sequence ID" value="AAM07813.1"/>
    <property type="molecule type" value="Genomic_DNA"/>
</dbReference>
<dbReference type="RefSeq" id="WP_011024349.1">
    <property type="nucleotide sequence ID" value="NC_003552.1"/>
</dbReference>
<dbReference type="SMR" id="Q8THP1"/>
<dbReference type="FunCoup" id="Q8THP1">
    <property type="interactions" value="119"/>
</dbReference>
<dbReference type="STRING" id="188937.MA_4473"/>
<dbReference type="EnsemblBacteria" id="AAM07813">
    <property type="protein sequence ID" value="AAM07813"/>
    <property type="gene ID" value="MA_4473"/>
</dbReference>
<dbReference type="GeneID" id="1476367"/>
<dbReference type="KEGG" id="mac:MA_4473"/>
<dbReference type="HOGENOM" id="CLU_049343_7_0_2"/>
<dbReference type="InParanoid" id="Q8THP1"/>
<dbReference type="OrthoDB" id="33636at2157"/>
<dbReference type="PhylomeDB" id="Q8THP1"/>
<dbReference type="UniPathway" id="UPA00034">
    <property type="reaction ID" value="UER00017"/>
</dbReference>
<dbReference type="Proteomes" id="UP000002487">
    <property type="component" value="Chromosome"/>
</dbReference>
<dbReference type="GO" id="GO:0005737">
    <property type="term" value="C:cytoplasm"/>
    <property type="evidence" value="ECO:0007669"/>
    <property type="project" value="UniProtKB-SubCell"/>
</dbReference>
<dbReference type="GO" id="GO:0008675">
    <property type="term" value="F:2-dehydro-3-deoxy-phosphogluconate aldolase activity"/>
    <property type="evidence" value="ECO:0007669"/>
    <property type="project" value="UniProtKB-ARBA"/>
</dbReference>
<dbReference type="GO" id="GO:0008840">
    <property type="term" value="F:4-hydroxy-tetrahydrodipicolinate synthase activity"/>
    <property type="evidence" value="ECO:0000318"/>
    <property type="project" value="GO_Central"/>
</dbReference>
<dbReference type="GO" id="GO:0019877">
    <property type="term" value="P:diaminopimelate biosynthetic process"/>
    <property type="evidence" value="ECO:0007669"/>
    <property type="project" value="UniProtKB-UniRule"/>
</dbReference>
<dbReference type="GO" id="GO:0009089">
    <property type="term" value="P:lysine biosynthetic process via diaminopimelate"/>
    <property type="evidence" value="ECO:0007669"/>
    <property type="project" value="UniProtKB-UniRule"/>
</dbReference>
<dbReference type="CDD" id="cd00950">
    <property type="entry name" value="DHDPS"/>
    <property type="match status" value="1"/>
</dbReference>
<dbReference type="Gene3D" id="3.20.20.70">
    <property type="entry name" value="Aldolase class I"/>
    <property type="match status" value="1"/>
</dbReference>
<dbReference type="HAMAP" id="MF_00418">
    <property type="entry name" value="DapA"/>
    <property type="match status" value="1"/>
</dbReference>
<dbReference type="InterPro" id="IPR013785">
    <property type="entry name" value="Aldolase_TIM"/>
</dbReference>
<dbReference type="InterPro" id="IPR005263">
    <property type="entry name" value="DapA"/>
</dbReference>
<dbReference type="InterPro" id="IPR002220">
    <property type="entry name" value="DapA-like"/>
</dbReference>
<dbReference type="InterPro" id="IPR020625">
    <property type="entry name" value="Schiff_base-form_aldolases_AS"/>
</dbReference>
<dbReference type="InterPro" id="IPR020624">
    <property type="entry name" value="Schiff_base-form_aldolases_CS"/>
</dbReference>
<dbReference type="NCBIfam" id="TIGR00674">
    <property type="entry name" value="dapA"/>
    <property type="match status" value="1"/>
</dbReference>
<dbReference type="PANTHER" id="PTHR12128:SF66">
    <property type="entry name" value="4-HYDROXY-2-OXOGLUTARATE ALDOLASE, MITOCHONDRIAL"/>
    <property type="match status" value="1"/>
</dbReference>
<dbReference type="PANTHER" id="PTHR12128">
    <property type="entry name" value="DIHYDRODIPICOLINATE SYNTHASE"/>
    <property type="match status" value="1"/>
</dbReference>
<dbReference type="Pfam" id="PF00701">
    <property type="entry name" value="DHDPS"/>
    <property type="match status" value="1"/>
</dbReference>
<dbReference type="PIRSF" id="PIRSF001365">
    <property type="entry name" value="DHDPS"/>
    <property type="match status" value="1"/>
</dbReference>
<dbReference type="PRINTS" id="PR00146">
    <property type="entry name" value="DHPICSNTHASE"/>
</dbReference>
<dbReference type="SMART" id="SM01130">
    <property type="entry name" value="DHDPS"/>
    <property type="match status" value="1"/>
</dbReference>
<dbReference type="SUPFAM" id="SSF51569">
    <property type="entry name" value="Aldolase"/>
    <property type="match status" value="1"/>
</dbReference>
<dbReference type="PROSITE" id="PS00665">
    <property type="entry name" value="DHDPS_1"/>
    <property type="match status" value="1"/>
</dbReference>
<dbReference type="PROSITE" id="PS00666">
    <property type="entry name" value="DHDPS_2"/>
    <property type="match status" value="1"/>
</dbReference>
<gene>
    <name evidence="1" type="primary">dapA</name>
    <name type="ordered locus">MA_4473</name>
</gene>
<reference key="1">
    <citation type="journal article" date="2002" name="Genome Res.">
        <title>The genome of Methanosarcina acetivorans reveals extensive metabolic and physiological diversity.</title>
        <authorList>
            <person name="Galagan J.E."/>
            <person name="Nusbaum C."/>
            <person name="Roy A."/>
            <person name="Endrizzi M.G."/>
            <person name="Macdonald P."/>
            <person name="FitzHugh W."/>
            <person name="Calvo S."/>
            <person name="Engels R."/>
            <person name="Smirnov S."/>
            <person name="Atnoor D."/>
            <person name="Brown A."/>
            <person name="Allen N."/>
            <person name="Naylor J."/>
            <person name="Stange-Thomann N."/>
            <person name="DeArellano K."/>
            <person name="Johnson R."/>
            <person name="Linton L."/>
            <person name="McEwan P."/>
            <person name="McKernan K."/>
            <person name="Talamas J."/>
            <person name="Tirrell A."/>
            <person name="Ye W."/>
            <person name="Zimmer A."/>
            <person name="Barber R.D."/>
            <person name="Cann I."/>
            <person name="Graham D.E."/>
            <person name="Grahame D.A."/>
            <person name="Guss A.M."/>
            <person name="Hedderich R."/>
            <person name="Ingram-Smith C."/>
            <person name="Kuettner H.C."/>
            <person name="Krzycki J.A."/>
            <person name="Leigh J.A."/>
            <person name="Li W."/>
            <person name="Liu J."/>
            <person name="Mukhopadhyay B."/>
            <person name="Reeve J.N."/>
            <person name="Smith K."/>
            <person name="Springer T.A."/>
            <person name="Umayam L.A."/>
            <person name="White O."/>
            <person name="White R.H."/>
            <person name="de Macario E.C."/>
            <person name="Ferry J.G."/>
            <person name="Jarrell K.F."/>
            <person name="Jing H."/>
            <person name="Macario A.J.L."/>
            <person name="Paulsen I.T."/>
            <person name="Pritchett M."/>
            <person name="Sowers K.R."/>
            <person name="Swanson R.V."/>
            <person name="Zinder S.H."/>
            <person name="Lander E."/>
            <person name="Metcalf W.W."/>
            <person name="Birren B."/>
        </authorList>
    </citation>
    <scope>NUCLEOTIDE SEQUENCE [LARGE SCALE GENOMIC DNA]</scope>
    <source>
        <strain>ATCC 35395 / DSM 2834 / JCM 12185 / C2A</strain>
    </source>
</reference>
<sequence length="291" mass="30632">MFEGAMPALITPFTKDDRIDREGLRRNIAFVEEGGVSGIVPCGTTGESATLSALEHEEVIDIAVECAKVPVVAGTGSNNTGEALQFTKHAADAGVDGVLLISPYYNKPNPAGLLAHFKKIAEAVDIPMILYNVPSRTGQDMPVDVITKLAKVENIVGIKEASGSVGKVSQILEQTIDDDFVVLSGEDGLTLPIISVGGSGVISVAANIVPDKMSGMVSAALKGDYETARKIHFEIAPLIRALFLETNPIPAKKAAELIGLASGHLRLPLAPMSDANQLKLVTELKKLGVMK</sequence>
<organism>
    <name type="scientific">Methanosarcina acetivorans (strain ATCC 35395 / DSM 2834 / JCM 12185 / C2A)</name>
    <dbReference type="NCBI Taxonomy" id="188937"/>
    <lineage>
        <taxon>Archaea</taxon>
        <taxon>Methanobacteriati</taxon>
        <taxon>Methanobacteriota</taxon>
        <taxon>Stenosarchaea group</taxon>
        <taxon>Methanomicrobia</taxon>
        <taxon>Methanosarcinales</taxon>
        <taxon>Methanosarcinaceae</taxon>
        <taxon>Methanosarcina</taxon>
    </lineage>
</organism>
<proteinExistence type="inferred from homology"/>
<accession>Q8THP1</accession>